<organism>
    <name type="scientific">Streptococcus agalactiae serotype Ia (strain ATCC 27591 / A909 / CDC SS700)</name>
    <dbReference type="NCBI Taxonomy" id="205921"/>
    <lineage>
        <taxon>Bacteria</taxon>
        <taxon>Bacillati</taxon>
        <taxon>Bacillota</taxon>
        <taxon>Bacilli</taxon>
        <taxon>Lactobacillales</taxon>
        <taxon>Streptococcaceae</taxon>
        <taxon>Streptococcus</taxon>
    </lineage>
</organism>
<dbReference type="EMBL" id="CP000114">
    <property type="protein sequence ID" value="ABA45258.1"/>
    <property type="molecule type" value="Genomic_DNA"/>
</dbReference>
<dbReference type="RefSeq" id="WP_000940931.1">
    <property type="nucleotide sequence ID" value="NC_007432.1"/>
</dbReference>
<dbReference type="KEGG" id="sak:SAK_2028"/>
<dbReference type="HOGENOM" id="CLU_146610_2_1_9"/>
<dbReference type="HAMAP" id="MF_01448">
    <property type="entry name" value="UPF0473"/>
    <property type="match status" value="1"/>
</dbReference>
<dbReference type="InterPro" id="IPR009711">
    <property type="entry name" value="UPF0473"/>
</dbReference>
<dbReference type="NCBIfam" id="NF010215">
    <property type="entry name" value="PRK13678.1-2"/>
    <property type="match status" value="1"/>
</dbReference>
<dbReference type="NCBIfam" id="NF010217">
    <property type="entry name" value="PRK13678.1-4"/>
    <property type="match status" value="1"/>
</dbReference>
<dbReference type="PANTHER" id="PTHR40066">
    <property type="entry name" value="UPF0473 PROTEIN CBO2561/CLC_2432"/>
    <property type="match status" value="1"/>
</dbReference>
<dbReference type="PANTHER" id="PTHR40066:SF1">
    <property type="entry name" value="UPF0473 PROTEIN CBO2561_CLC_2432"/>
    <property type="match status" value="1"/>
</dbReference>
<dbReference type="Pfam" id="PF06949">
    <property type="entry name" value="DUF1292"/>
    <property type="match status" value="1"/>
</dbReference>
<feature type="chain" id="PRO_0000304853" description="UPF0473 protein SAK_2028">
    <location>
        <begin position="1"/>
        <end position="105"/>
    </location>
</feature>
<comment type="similarity">
    <text evidence="1">Belongs to the UPF0473 family.</text>
</comment>
<accession>Q3JYN5</accession>
<proteinExistence type="inferred from homology"/>
<reference key="1">
    <citation type="journal article" date="2005" name="Proc. Natl. Acad. Sci. U.S.A.">
        <title>Genome analysis of multiple pathogenic isolates of Streptococcus agalactiae: implications for the microbial 'pan-genome'.</title>
        <authorList>
            <person name="Tettelin H."/>
            <person name="Masignani V."/>
            <person name="Cieslewicz M.J."/>
            <person name="Donati C."/>
            <person name="Medini D."/>
            <person name="Ward N.L."/>
            <person name="Angiuoli S.V."/>
            <person name="Crabtree J."/>
            <person name="Jones A.L."/>
            <person name="Durkin A.S."/>
            <person name="DeBoy R.T."/>
            <person name="Davidsen T.M."/>
            <person name="Mora M."/>
            <person name="Scarselli M."/>
            <person name="Margarit y Ros I."/>
            <person name="Peterson J.D."/>
            <person name="Hauser C.R."/>
            <person name="Sundaram J.P."/>
            <person name="Nelson W.C."/>
            <person name="Madupu R."/>
            <person name="Brinkac L.M."/>
            <person name="Dodson R.J."/>
            <person name="Rosovitz M.J."/>
            <person name="Sullivan S.A."/>
            <person name="Daugherty S.C."/>
            <person name="Haft D.H."/>
            <person name="Selengut J."/>
            <person name="Gwinn M.L."/>
            <person name="Zhou L."/>
            <person name="Zafar N."/>
            <person name="Khouri H."/>
            <person name="Radune D."/>
            <person name="Dimitrov G."/>
            <person name="Watkins K."/>
            <person name="O'Connor K.J."/>
            <person name="Smith S."/>
            <person name="Utterback T.R."/>
            <person name="White O."/>
            <person name="Rubens C.E."/>
            <person name="Grandi G."/>
            <person name="Madoff L.C."/>
            <person name="Kasper D.L."/>
            <person name="Telford J.L."/>
            <person name="Wessels M.R."/>
            <person name="Rappuoli R."/>
            <person name="Fraser C.M."/>
        </authorList>
    </citation>
    <scope>NUCLEOTIDE SEQUENCE [LARGE SCALE GENOMIC DNA]</scope>
    <source>
        <strain>ATCC 27591 / A909 / CDC SS700</strain>
    </source>
</reference>
<protein>
    <recommendedName>
        <fullName evidence="1">UPF0473 protein SAK_2028</fullName>
    </recommendedName>
</protein>
<evidence type="ECO:0000255" key="1">
    <source>
        <dbReference type="HAMAP-Rule" id="MF_01448"/>
    </source>
</evidence>
<name>Y2028_STRA1</name>
<gene>
    <name type="ordered locus">SAK_2028</name>
</gene>
<sequence>MAHNHNHDHNHEHQHEVITLVDENGNETLFEILLTIDGREEFGKNYVLLIPAGAEEDEQGEIEIQAYSFTENADGTEGDLQPIPEDSDAEWDMIEEVFNSFLDEE</sequence>